<protein>
    <recommendedName>
        <fullName evidence="1">S-adenosylmethionine:tRNA ribosyltransferase-isomerase</fullName>
        <ecNumber evidence="1">2.4.99.17</ecNumber>
    </recommendedName>
    <alternativeName>
        <fullName evidence="1">Queuosine biosynthesis protein QueA</fullName>
    </alternativeName>
</protein>
<feature type="chain" id="PRO_0000165374" description="S-adenosylmethionine:tRNA ribosyltransferase-isomerase">
    <location>
        <begin position="1"/>
        <end position="366"/>
    </location>
</feature>
<gene>
    <name evidence="1" type="primary">queA</name>
    <name type="ordered locus">Atu1678</name>
    <name type="ORF">AGR_C_3086</name>
</gene>
<keyword id="KW-0963">Cytoplasm</keyword>
<keyword id="KW-0671">Queuosine biosynthesis</keyword>
<keyword id="KW-1185">Reference proteome</keyword>
<keyword id="KW-0949">S-adenosyl-L-methionine</keyword>
<keyword id="KW-0808">Transferase</keyword>
<reference key="1">
    <citation type="journal article" date="2001" name="Science">
        <title>The genome of the natural genetic engineer Agrobacterium tumefaciens C58.</title>
        <authorList>
            <person name="Wood D.W."/>
            <person name="Setubal J.C."/>
            <person name="Kaul R."/>
            <person name="Monks D.E."/>
            <person name="Kitajima J.P."/>
            <person name="Okura V.K."/>
            <person name="Zhou Y."/>
            <person name="Chen L."/>
            <person name="Wood G.E."/>
            <person name="Almeida N.F. Jr."/>
            <person name="Woo L."/>
            <person name="Chen Y."/>
            <person name="Paulsen I.T."/>
            <person name="Eisen J.A."/>
            <person name="Karp P.D."/>
            <person name="Bovee D. Sr."/>
            <person name="Chapman P."/>
            <person name="Clendenning J."/>
            <person name="Deatherage G."/>
            <person name="Gillet W."/>
            <person name="Grant C."/>
            <person name="Kutyavin T."/>
            <person name="Levy R."/>
            <person name="Li M.-J."/>
            <person name="McClelland E."/>
            <person name="Palmieri A."/>
            <person name="Raymond C."/>
            <person name="Rouse G."/>
            <person name="Saenphimmachak C."/>
            <person name="Wu Z."/>
            <person name="Romero P."/>
            <person name="Gordon D."/>
            <person name="Zhang S."/>
            <person name="Yoo H."/>
            <person name="Tao Y."/>
            <person name="Biddle P."/>
            <person name="Jung M."/>
            <person name="Krespan W."/>
            <person name="Perry M."/>
            <person name="Gordon-Kamm B."/>
            <person name="Liao L."/>
            <person name="Kim S."/>
            <person name="Hendrick C."/>
            <person name="Zhao Z.-Y."/>
            <person name="Dolan M."/>
            <person name="Chumley F."/>
            <person name="Tingey S.V."/>
            <person name="Tomb J.-F."/>
            <person name="Gordon M.P."/>
            <person name="Olson M.V."/>
            <person name="Nester E.W."/>
        </authorList>
    </citation>
    <scope>NUCLEOTIDE SEQUENCE [LARGE SCALE GENOMIC DNA]</scope>
    <source>
        <strain>C58 / ATCC 33970</strain>
    </source>
</reference>
<reference key="2">
    <citation type="journal article" date="2001" name="Science">
        <title>Genome sequence of the plant pathogen and biotechnology agent Agrobacterium tumefaciens C58.</title>
        <authorList>
            <person name="Goodner B."/>
            <person name="Hinkle G."/>
            <person name="Gattung S."/>
            <person name="Miller N."/>
            <person name="Blanchard M."/>
            <person name="Qurollo B."/>
            <person name="Goldman B.S."/>
            <person name="Cao Y."/>
            <person name="Askenazi M."/>
            <person name="Halling C."/>
            <person name="Mullin L."/>
            <person name="Houmiel K."/>
            <person name="Gordon J."/>
            <person name="Vaudin M."/>
            <person name="Iartchouk O."/>
            <person name="Epp A."/>
            <person name="Liu F."/>
            <person name="Wollam C."/>
            <person name="Allinger M."/>
            <person name="Doughty D."/>
            <person name="Scott C."/>
            <person name="Lappas C."/>
            <person name="Markelz B."/>
            <person name="Flanagan C."/>
            <person name="Crowell C."/>
            <person name="Gurson J."/>
            <person name="Lomo C."/>
            <person name="Sear C."/>
            <person name="Strub G."/>
            <person name="Cielo C."/>
            <person name="Slater S."/>
        </authorList>
    </citation>
    <scope>NUCLEOTIDE SEQUENCE [LARGE SCALE GENOMIC DNA]</scope>
    <source>
        <strain>C58 / ATCC 33970</strain>
    </source>
</reference>
<sequence length="366" mass="40719">MRVDLFDFDLPEENIALRPANPRDSARLLVVDPNENRMEDHRVFDLPSFLRPGDALVFNDTRVIPAQLEGVRLREGAPETAVSATLHMRADQSRWKAFARPGKRIKEGDRIRFGYDRDTVNSSSGACGLAHLEATVEEKGEEGEITLLFDISGPVLDEAIASVGHIPLPPYIAAKRPEDQQDQTDYQTIYAREKGAVAAPTAGLHFTPDLFEALDSAGIERHFVTLHVGAGTFLPVKSDDTDDHKMHFEIGYVSQETADRLNAVKARGGRIVCVGTTSLRLIESAATEDGTIHPWSDATGIFITPGYRFRAVDMLMTNFHLPKSTLFMLVSAFCGLETMRDAYRHAIETGYRFYSYGDSSLLFRKN</sequence>
<organism>
    <name type="scientific">Agrobacterium fabrum (strain C58 / ATCC 33970)</name>
    <name type="common">Agrobacterium tumefaciens (strain C58)</name>
    <dbReference type="NCBI Taxonomy" id="176299"/>
    <lineage>
        <taxon>Bacteria</taxon>
        <taxon>Pseudomonadati</taxon>
        <taxon>Pseudomonadota</taxon>
        <taxon>Alphaproteobacteria</taxon>
        <taxon>Hyphomicrobiales</taxon>
        <taxon>Rhizobiaceae</taxon>
        <taxon>Rhizobium/Agrobacterium group</taxon>
        <taxon>Agrobacterium</taxon>
        <taxon>Agrobacterium tumefaciens complex</taxon>
    </lineage>
</organism>
<evidence type="ECO:0000255" key="1">
    <source>
        <dbReference type="HAMAP-Rule" id="MF_00113"/>
    </source>
</evidence>
<accession>Q8UES7</accession>
<proteinExistence type="inferred from homology"/>
<dbReference type="EC" id="2.4.99.17" evidence="1"/>
<dbReference type="EMBL" id="AE007869">
    <property type="protein sequence ID" value="AAK87450.2"/>
    <property type="molecule type" value="Genomic_DNA"/>
</dbReference>
<dbReference type="PIR" id="A97562">
    <property type="entry name" value="A97562"/>
</dbReference>
<dbReference type="PIR" id="AH2782">
    <property type="entry name" value="AH2782"/>
</dbReference>
<dbReference type="RefSeq" id="NP_354665.2">
    <property type="nucleotide sequence ID" value="NC_003062.2"/>
</dbReference>
<dbReference type="RefSeq" id="WP_010971794.1">
    <property type="nucleotide sequence ID" value="NC_003062.2"/>
</dbReference>
<dbReference type="SMR" id="Q8UES7"/>
<dbReference type="STRING" id="176299.Atu1678"/>
<dbReference type="EnsemblBacteria" id="AAK87450">
    <property type="protein sequence ID" value="AAK87450"/>
    <property type="gene ID" value="Atu1678"/>
</dbReference>
<dbReference type="GeneID" id="1133716"/>
<dbReference type="KEGG" id="atu:Atu1678"/>
<dbReference type="PATRIC" id="fig|176299.10.peg.1695"/>
<dbReference type="eggNOG" id="COG0809">
    <property type="taxonomic scope" value="Bacteria"/>
</dbReference>
<dbReference type="HOGENOM" id="CLU_039110_1_1_5"/>
<dbReference type="OrthoDB" id="9805933at2"/>
<dbReference type="PhylomeDB" id="Q8UES7"/>
<dbReference type="BioCyc" id="AGRO:ATU1678-MONOMER"/>
<dbReference type="UniPathway" id="UPA00392"/>
<dbReference type="Proteomes" id="UP000000813">
    <property type="component" value="Chromosome circular"/>
</dbReference>
<dbReference type="GO" id="GO:0005737">
    <property type="term" value="C:cytoplasm"/>
    <property type="evidence" value="ECO:0007669"/>
    <property type="project" value="UniProtKB-SubCell"/>
</dbReference>
<dbReference type="GO" id="GO:0051075">
    <property type="term" value="F:S-adenosylmethionine:tRNA ribosyltransferase-isomerase activity"/>
    <property type="evidence" value="ECO:0007669"/>
    <property type="project" value="UniProtKB-EC"/>
</dbReference>
<dbReference type="GO" id="GO:0008616">
    <property type="term" value="P:queuosine biosynthetic process"/>
    <property type="evidence" value="ECO:0007669"/>
    <property type="project" value="UniProtKB-UniRule"/>
</dbReference>
<dbReference type="GO" id="GO:0002099">
    <property type="term" value="P:tRNA wobble guanine modification"/>
    <property type="evidence" value="ECO:0007669"/>
    <property type="project" value="TreeGrafter"/>
</dbReference>
<dbReference type="FunFam" id="3.40.1780.10:FF:000001">
    <property type="entry name" value="S-adenosylmethionine:tRNA ribosyltransferase-isomerase"/>
    <property type="match status" value="1"/>
</dbReference>
<dbReference type="Gene3D" id="2.40.10.240">
    <property type="entry name" value="QueA-like"/>
    <property type="match status" value="1"/>
</dbReference>
<dbReference type="Gene3D" id="3.40.1780.10">
    <property type="entry name" value="QueA-like"/>
    <property type="match status" value="1"/>
</dbReference>
<dbReference type="HAMAP" id="MF_00113">
    <property type="entry name" value="QueA"/>
    <property type="match status" value="1"/>
</dbReference>
<dbReference type="InterPro" id="IPR003699">
    <property type="entry name" value="QueA"/>
</dbReference>
<dbReference type="InterPro" id="IPR042118">
    <property type="entry name" value="QueA_dom1"/>
</dbReference>
<dbReference type="InterPro" id="IPR042119">
    <property type="entry name" value="QueA_dom2"/>
</dbReference>
<dbReference type="InterPro" id="IPR036100">
    <property type="entry name" value="QueA_sf"/>
</dbReference>
<dbReference type="NCBIfam" id="NF001140">
    <property type="entry name" value="PRK00147.1"/>
    <property type="match status" value="1"/>
</dbReference>
<dbReference type="NCBIfam" id="TIGR00113">
    <property type="entry name" value="queA"/>
    <property type="match status" value="1"/>
</dbReference>
<dbReference type="PANTHER" id="PTHR30307">
    <property type="entry name" value="S-ADENOSYLMETHIONINE:TRNA RIBOSYLTRANSFERASE-ISOMERASE"/>
    <property type="match status" value="1"/>
</dbReference>
<dbReference type="PANTHER" id="PTHR30307:SF0">
    <property type="entry name" value="S-ADENOSYLMETHIONINE:TRNA RIBOSYLTRANSFERASE-ISOMERASE"/>
    <property type="match status" value="1"/>
</dbReference>
<dbReference type="Pfam" id="PF02547">
    <property type="entry name" value="Queuosine_synth"/>
    <property type="match status" value="1"/>
</dbReference>
<dbReference type="SUPFAM" id="SSF111337">
    <property type="entry name" value="QueA-like"/>
    <property type="match status" value="1"/>
</dbReference>
<name>QUEA_AGRFC</name>
<comment type="function">
    <text evidence="1">Transfers and isomerizes the ribose moiety from AdoMet to the 7-aminomethyl group of 7-deazaguanine (preQ1-tRNA) to give epoxyqueuosine (oQ-tRNA).</text>
</comment>
<comment type="catalytic activity">
    <reaction evidence="1">
        <text>7-aminomethyl-7-carbaguanosine(34) in tRNA + S-adenosyl-L-methionine = epoxyqueuosine(34) in tRNA + adenine + L-methionine + 2 H(+)</text>
        <dbReference type="Rhea" id="RHEA:32155"/>
        <dbReference type="Rhea" id="RHEA-COMP:10342"/>
        <dbReference type="Rhea" id="RHEA-COMP:18582"/>
        <dbReference type="ChEBI" id="CHEBI:15378"/>
        <dbReference type="ChEBI" id="CHEBI:16708"/>
        <dbReference type="ChEBI" id="CHEBI:57844"/>
        <dbReference type="ChEBI" id="CHEBI:59789"/>
        <dbReference type="ChEBI" id="CHEBI:82833"/>
        <dbReference type="ChEBI" id="CHEBI:194443"/>
        <dbReference type="EC" id="2.4.99.17"/>
    </reaction>
</comment>
<comment type="pathway">
    <text evidence="1">tRNA modification; tRNA-queuosine biosynthesis.</text>
</comment>
<comment type="subunit">
    <text evidence="1">Monomer.</text>
</comment>
<comment type="subcellular location">
    <subcellularLocation>
        <location evidence="1">Cytoplasm</location>
    </subcellularLocation>
</comment>
<comment type="similarity">
    <text evidence="1">Belongs to the QueA family.</text>
</comment>